<proteinExistence type="inferred from homology"/>
<gene>
    <name type="ordered locus">VC0395_A2049</name>
    <name type="ordered locus">VC395_2587</name>
</gene>
<protein>
    <recommendedName>
        <fullName evidence="1">tRNA-modifying protein YgfZ</fullName>
    </recommendedName>
</protein>
<keyword id="KW-0963">Cytoplasm</keyword>
<keyword id="KW-0290">Folate-binding</keyword>
<keyword id="KW-0819">tRNA processing</keyword>
<sequence>MDWQNRFSVLNLSSHDPLPELMLTHLTGWGAITLVGTDKKAYLQGQVTCNVVSLQEQQVTFGAHCDAKGKVWSVFRLFHHHDGYAMFQPQSAMEVELRELKKYAIFSKVTIAESSDIALGVMGSQADAWIDTVSETTGDVRRIAGGTAVRMSPQRWLLLVNAEQAEQYVNAWQGLHVEQSLWTRMDIEEAVPVVTQTAQNEHIPQALNVQAVDGISFTKGCYTGQETVARAKYRGINKRAMYIVKGNLSAPLSQDEPVVLERAVGENWRSAGALLTYYRFTDSIAIGLIVLPNDLEHDVELRLAAQPDTRWHIQPLPYSLSEE</sequence>
<dbReference type="EMBL" id="CP000627">
    <property type="protein sequence ID" value="ABQ21867.1"/>
    <property type="molecule type" value="Genomic_DNA"/>
</dbReference>
<dbReference type="EMBL" id="CP001235">
    <property type="protein sequence ID" value="ACP10574.1"/>
    <property type="molecule type" value="Genomic_DNA"/>
</dbReference>
<dbReference type="SMR" id="A5F5F3"/>
<dbReference type="KEGG" id="vco:VC0395_A2049"/>
<dbReference type="KEGG" id="vcr:VC395_2587"/>
<dbReference type="PATRIC" id="fig|345073.21.peg.2491"/>
<dbReference type="eggNOG" id="COG0354">
    <property type="taxonomic scope" value="Bacteria"/>
</dbReference>
<dbReference type="HOGENOM" id="CLU_007884_6_1_6"/>
<dbReference type="OrthoDB" id="9796287at2"/>
<dbReference type="Proteomes" id="UP000000249">
    <property type="component" value="Chromosome 2"/>
</dbReference>
<dbReference type="GO" id="GO:0005737">
    <property type="term" value="C:cytoplasm"/>
    <property type="evidence" value="ECO:0007669"/>
    <property type="project" value="UniProtKB-SubCell"/>
</dbReference>
<dbReference type="GO" id="GO:0005542">
    <property type="term" value="F:folic acid binding"/>
    <property type="evidence" value="ECO:0007669"/>
    <property type="project" value="UniProtKB-UniRule"/>
</dbReference>
<dbReference type="GO" id="GO:0016226">
    <property type="term" value="P:iron-sulfur cluster assembly"/>
    <property type="evidence" value="ECO:0007669"/>
    <property type="project" value="TreeGrafter"/>
</dbReference>
<dbReference type="GO" id="GO:0009451">
    <property type="term" value="P:RNA modification"/>
    <property type="evidence" value="ECO:0007669"/>
    <property type="project" value="InterPro"/>
</dbReference>
<dbReference type="GO" id="GO:0008033">
    <property type="term" value="P:tRNA processing"/>
    <property type="evidence" value="ECO:0007669"/>
    <property type="project" value="UniProtKB-UniRule"/>
</dbReference>
<dbReference type="FunFam" id="3.30.70.1400:FF:000002">
    <property type="entry name" value="tRNA-modifying protein YgfZ"/>
    <property type="match status" value="1"/>
</dbReference>
<dbReference type="Gene3D" id="2.40.30.160">
    <property type="match status" value="1"/>
</dbReference>
<dbReference type="Gene3D" id="3.30.70.1630">
    <property type="match status" value="1"/>
</dbReference>
<dbReference type="Gene3D" id="3.30.70.1400">
    <property type="entry name" value="Aminomethyltransferase beta-barrel domains"/>
    <property type="match status" value="1"/>
</dbReference>
<dbReference type="HAMAP" id="MF_01175">
    <property type="entry name" value="tRNA_modifying_YgfZ"/>
    <property type="match status" value="1"/>
</dbReference>
<dbReference type="InterPro" id="IPR029043">
    <property type="entry name" value="GcvT/YgfZ_C"/>
</dbReference>
<dbReference type="InterPro" id="IPR023758">
    <property type="entry name" value="tRNA-modifying_YgfZ"/>
</dbReference>
<dbReference type="InterPro" id="IPR045179">
    <property type="entry name" value="YgfZ/GcvT"/>
</dbReference>
<dbReference type="InterPro" id="IPR017703">
    <property type="entry name" value="YgfZ/GcvT_CS"/>
</dbReference>
<dbReference type="InterPro" id="IPR048451">
    <property type="entry name" value="YgfZ_barrel"/>
</dbReference>
<dbReference type="NCBIfam" id="NF007110">
    <property type="entry name" value="PRK09559.1"/>
    <property type="match status" value="1"/>
</dbReference>
<dbReference type="NCBIfam" id="TIGR03317">
    <property type="entry name" value="ygfZ_signature"/>
    <property type="match status" value="1"/>
</dbReference>
<dbReference type="PANTHER" id="PTHR22602">
    <property type="entry name" value="TRANSFERASE CAF17, MITOCHONDRIAL-RELATED"/>
    <property type="match status" value="1"/>
</dbReference>
<dbReference type="PANTHER" id="PTHR22602:SF0">
    <property type="entry name" value="TRANSFERASE CAF17, MITOCHONDRIAL-RELATED"/>
    <property type="match status" value="1"/>
</dbReference>
<dbReference type="Pfam" id="PF21130">
    <property type="entry name" value="YgfZ_barrel"/>
    <property type="match status" value="1"/>
</dbReference>
<dbReference type="SUPFAM" id="SSF101790">
    <property type="entry name" value="Aminomethyltransferase beta-barrel domain"/>
    <property type="match status" value="1"/>
</dbReference>
<dbReference type="SUPFAM" id="SSF103025">
    <property type="entry name" value="Folate-binding domain"/>
    <property type="match status" value="1"/>
</dbReference>
<name>YGFZ_VIBC3</name>
<accession>A5F5F3</accession>
<accession>C3M4W3</accession>
<comment type="function">
    <text evidence="1">Folate-binding protein involved in regulating the level of ATP-DnaA and in the modification of some tRNAs. It is probably a key factor in regulatory networks that act via tRNA modification, such as initiation of chromosomal replication.</text>
</comment>
<comment type="subcellular location">
    <subcellularLocation>
        <location evidence="1">Cytoplasm</location>
    </subcellularLocation>
</comment>
<comment type="similarity">
    <text evidence="1">Belongs to the tRNA-modifying YgfZ family.</text>
</comment>
<organism>
    <name type="scientific">Vibrio cholerae serotype O1 (strain ATCC 39541 / Classical Ogawa 395 / O395)</name>
    <dbReference type="NCBI Taxonomy" id="345073"/>
    <lineage>
        <taxon>Bacteria</taxon>
        <taxon>Pseudomonadati</taxon>
        <taxon>Pseudomonadota</taxon>
        <taxon>Gammaproteobacteria</taxon>
        <taxon>Vibrionales</taxon>
        <taxon>Vibrionaceae</taxon>
        <taxon>Vibrio</taxon>
    </lineage>
</organism>
<feature type="chain" id="PRO_1000073080" description="tRNA-modifying protein YgfZ">
    <location>
        <begin position="1"/>
        <end position="323"/>
    </location>
</feature>
<feature type="binding site" evidence="1">
    <location>
        <position position="29"/>
    </location>
    <ligand>
        <name>folate</name>
        <dbReference type="ChEBI" id="CHEBI:62501"/>
    </ligand>
</feature>
<feature type="binding site" evidence="1">
    <location>
        <position position="182"/>
    </location>
    <ligand>
        <name>folate</name>
        <dbReference type="ChEBI" id="CHEBI:62501"/>
    </ligand>
</feature>
<reference key="1">
    <citation type="submission" date="2007-03" db="EMBL/GenBank/DDBJ databases">
        <authorList>
            <person name="Heidelberg J."/>
        </authorList>
    </citation>
    <scope>NUCLEOTIDE SEQUENCE [LARGE SCALE GENOMIC DNA]</scope>
    <source>
        <strain>ATCC 39541 / Classical Ogawa 395 / O395</strain>
    </source>
</reference>
<reference key="2">
    <citation type="journal article" date="2008" name="PLoS ONE">
        <title>A recalibrated molecular clock and independent origins for the cholera pandemic clones.</title>
        <authorList>
            <person name="Feng L."/>
            <person name="Reeves P.R."/>
            <person name="Lan R."/>
            <person name="Ren Y."/>
            <person name="Gao C."/>
            <person name="Zhou Z."/>
            <person name="Ren Y."/>
            <person name="Cheng J."/>
            <person name="Wang W."/>
            <person name="Wang J."/>
            <person name="Qian W."/>
            <person name="Li D."/>
            <person name="Wang L."/>
        </authorList>
    </citation>
    <scope>NUCLEOTIDE SEQUENCE [LARGE SCALE GENOMIC DNA]</scope>
    <source>
        <strain>ATCC 39541 / Classical Ogawa 395 / O395</strain>
    </source>
</reference>
<evidence type="ECO:0000255" key="1">
    <source>
        <dbReference type="HAMAP-Rule" id="MF_01175"/>
    </source>
</evidence>